<organism>
    <name type="scientific">Salinispora tropica (strain ATCC BAA-916 / DSM 44818 / JCM 13857 / NBRC 105044 / CNB-440)</name>
    <dbReference type="NCBI Taxonomy" id="369723"/>
    <lineage>
        <taxon>Bacteria</taxon>
        <taxon>Bacillati</taxon>
        <taxon>Actinomycetota</taxon>
        <taxon>Actinomycetes</taxon>
        <taxon>Micromonosporales</taxon>
        <taxon>Micromonosporaceae</taxon>
        <taxon>Salinispora</taxon>
    </lineage>
</organism>
<proteinExistence type="inferred from homology"/>
<feature type="chain" id="PRO_0000334410" description="Na(+)/H(+) antiporter NhaA 1">
    <location>
        <begin position="1"/>
        <end position="436"/>
    </location>
</feature>
<feature type="transmembrane region" description="Helical" evidence="1">
    <location>
        <begin position="35"/>
        <end position="55"/>
    </location>
</feature>
<feature type="transmembrane region" description="Helical" evidence="1">
    <location>
        <begin position="80"/>
        <end position="100"/>
    </location>
</feature>
<feature type="transmembrane region" description="Helical" evidence="1">
    <location>
        <begin position="116"/>
        <end position="136"/>
    </location>
</feature>
<feature type="transmembrane region" description="Helical" evidence="1">
    <location>
        <begin position="147"/>
        <end position="167"/>
    </location>
</feature>
<feature type="transmembrane region" description="Helical" evidence="1">
    <location>
        <begin position="176"/>
        <end position="196"/>
    </location>
</feature>
<feature type="transmembrane region" description="Helical" evidence="1">
    <location>
        <begin position="201"/>
        <end position="221"/>
    </location>
</feature>
<feature type="transmembrane region" description="Helical" evidence="1">
    <location>
        <begin position="226"/>
        <end position="246"/>
    </location>
</feature>
<feature type="transmembrane region" description="Helical" evidence="1">
    <location>
        <begin position="283"/>
        <end position="303"/>
    </location>
</feature>
<feature type="transmembrane region" description="Helical" evidence="1">
    <location>
        <begin position="313"/>
        <end position="333"/>
    </location>
</feature>
<feature type="transmembrane region" description="Helical" evidence="1">
    <location>
        <begin position="354"/>
        <end position="374"/>
    </location>
</feature>
<feature type="transmembrane region" description="Helical" evidence="1">
    <location>
        <begin position="385"/>
        <end position="405"/>
    </location>
</feature>
<comment type="function">
    <text evidence="1">Na(+)/H(+) antiporter that extrudes sodium in exchange for external protons.</text>
</comment>
<comment type="catalytic activity">
    <reaction evidence="1">
        <text>Na(+)(in) + 2 H(+)(out) = Na(+)(out) + 2 H(+)(in)</text>
        <dbReference type="Rhea" id="RHEA:29251"/>
        <dbReference type="ChEBI" id="CHEBI:15378"/>
        <dbReference type="ChEBI" id="CHEBI:29101"/>
    </reaction>
    <physiologicalReaction direction="left-to-right" evidence="1">
        <dbReference type="Rhea" id="RHEA:29252"/>
    </physiologicalReaction>
</comment>
<comment type="subcellular location">
    <subcellularLocation>
        <location evidence="1">Cell membrane</location>
        <topology evidence="1">Multi-pass membrane protein</topology>
    </subcellularLocation>
</comment>
<comment type="similarity">
    <text evidence="1">Belongs to the NhaA Na(+)/H(+) (TC 2.A.33) antiporter family.</text>
</comment>
<gene>
    <name evidence="1" type="primary">nhaA1</name>
    <name type="ordered locus">Strop_2118</name>
</gene>
<keyword id="KW-0050">Antiport</keyword>
<keyword id="KW-1003">Cell membrane</keyword>
<keyword id="KW-0406">Ion transport</keyword>
<keyword id="KW-0472">Membrane</keyword>
<keyword id="KW-1185">Reference proteome</keyword>
<keyword id="KW-0915">Sodium</keyword>
<keyword id="KW-0739">Sodium transport</keyword>
<keyword id="KW-0812">Transmembrane</keyword>
<keyword id="KW-1133">Transmembrane helix</keyword>
<keyword id="KW-0813">Transport</keyword>
<evidence type="ECO:0000255" key="1">
    <source>
        <dbReference type="HAMAP-Rule" id="MF_01844"/>
    </source>
</evidence>
<name>NHAA1_SALTO</name>
<sequence length="436" mass="46553">MTDRTPPPGRARRLFSRTSWPEARFLADVLRTETFGGGLLLLGAVIALVWANSPWGGSYSALASWVPWPGGSDLHLDLDLATWAADGLLAIFFFVVGLELKREFVAGDLRDPRRAALPVIAAIGGMIVPALIYVGVNLSAGGENLRGWAIPTATDIAFALAVLAVIGSHLPQGLRAFLLTLAVVDDLLAITVIAIFYTGDFKLTPLLLALLPIALFGLLVQRRKTWWWALIPLAVVAWTLVHESGVHATVAGVLLGFTVPVLRGREGDRHGLAEHLEHRWRPVSAGFAVPVFAFFAAGVSLRGADLGAVITDPIVVGIVAGLVLGKVLGIFGSTFLLARFTRAELDRDITWTDLLGVSLLAGIGFTVSLLIGELAFEGGAADDNVKAAVLTGSLIAALLASIVLIRRNKAYRRIAVKERVDSNRDGVPDVFQHRDG</sequence>
<protein>
    <recommendedName>
        <fullName evidence="1">Na(+)/H(+) antiporter NhaA 1</fullName>
    </recommendedName>
    <alternativeName>
        <fullName evidence="1">Sodium/proton antiporter NhaA 1</fullName>
    </alternativeName>
</protein>
<dbReference type="EMBL" id="CP000667">
    <property type="protein sequence ID" value="ABP54569.1"/>
    <property type="molecule type" value="Genomic_DNA"/>
</dbReference>
<dbReference type="SMR" id="A4X6R9"/>
<dbReference type="STRING" id="369723.Strop_2118"/>
<dbReference type="KEGG" id="stp:Strop_2118"/>
<dbReference type="PATRIC" id="fig|369723.5.peg.2172"/>
<dbReference type="eggNOG" id="COG3004">
    <property type="taxonomic scope" value="Bacteria"/>
</dbReference>
<dbReference type="HOGENOM" id="CLU_015803_0_0_11"/>
<dbReference type="Proteomes" id="UP000000235">
    <property type="component" value="Chromosome"/>
</dbReference>
<dbReference type="GO" id="GO:0005886">
    <property type="term" value="C:plasma membrane"/>
    <property type="evidence" value="ECO:0007669"/>
    <property type="project" value="UniProtKB-SubCell"/>
</dbReference>
<dbReference type="GO" id="GO:0015385">
    <property type="term" value="F:sodium:proton antiporter activity"/>
    <property type="evidence" value="ECO:0007669"/>
    <property type="project" value="TreeGrafter"/>
</dbReference>
<dbReference type="GO" id="GO:0006885">
    <property type="term" value="P:regulation of pH"/>
    <property type="evidence" value="ECO:0007669"/>
    <property type="project" value="InterPro"/>
</dbReference>
<dbReference type="Gene3D" id="1.20.1530.10">
    <property type="entry name" value="Na+/H+ antiporter like domain"/>
    <property type="match status" value="1"/>
</dbReference>
<dbReference type="HAMAP" id="MF_01844">
    <property type="entry name" value="NhaA"/>
    <property type="match status" value="1"/>
</dbReference>
<dbReference type="InterPro" id="IPR023171">
    <property type="entry name" value="Na/H_antiporter_dom_sf"/>
</dbReference>
<dbReference type="InterPro" id="IPR004670">
    <property type="entry name" value="NhaA"/>
</dbReference>
<dbReference type="NCBIfam" id="TIGR00773">
    <property type="entry name" value="NhaA"/>
    <property type="match status" value="1"/>
</dbReference>
<dbReference type="PANTHER" id="PTHR30341:SF0">
    <property type="entry name" value="NA(+)_H(+) ANTIPORTER NHAA"/>
    <property type="match status" value="1"/>
</dbReference>
<dbReference type="PANTHER" id="PTHR30341">
    <property type="entry name" value="SODIUM ION/PROTON ANTIPORTER NHAA-RELATED"/>
    <property type="match status" value="1"/>
</dbReference>
<dbReference type="Pfam" id="PF06965">
    <property type="entry name" value="Na_H_antiport_1"/>
    <property type="match status" value="1"/>
</dbReference>
<accession>A4X6R9</accession>
<reference key="1">
    <citation type="journal article" date="2007" name="Proc. Natl. Acad. Sci. U.S.A.">
        <title>Genome sequencing reveals complex secondary metabolome in the marine actinomycete Salinispora tropica.</title>
        <authorList>
            <person name="Udwary D.W."/>
            <person name="Zeigler L."/>
            <person name="Asolkar R.N."/>
            <person name="Singan V."/>
            <person name="Lapidus A."/>
            <person name="Fenical W."/>
            <person name="Jensen P.R."/>
            <person name="Moore B.S."/>
        </authorList>
    </citation>
    <scope>NUCLEOTIDE SEQUENCE [LARGE SCALE GENOMIC DNA]</scope>
    <source>
        <strain>ATCC BAA-916 / DSM 44818 / JCM 13857 / NBRC 105044 / CNB-440</strain>
    </source>
</reference>